<sequence>MIRVISLFLVFVSLASANIFDFLNNNFAGRGQQQGGQVQTPEQYENAILNTNCGKYVCPDTGMCVEAPKFCPCPYPSSQLRCFLPDGRYLCISKPAGDISAKYDDPKSNWKVDAKDDNIRDCGWVSRAWRGLV</sequence>
<organism>
    <name type="scientific">Scheffersomyces stipitis (strain ATCC 58785 / CBS 6054 / NBRC 10063 / NRRL Y-11545)</name>
    <name type="common">Yeast</name>
    <name type="synonym">Pichia stipitis</name>
    <dbReference type="NCBI Taxonomy" id="322104"/>
    <lineage>
        <taxon>Eukaryota</taxon>
        <taxon>Fungi</taxon>
        <taxon>Dikarya</taxon>
        <taxon>Ascomycota</taxon>
        <taxon>Saccharomycotina</taxon>
        <taxon>Pichiomycetes</taxon>
        <taxon>Debaryomycetaceae</taxon>
        <taxon>Scheffersomyces</taxon>
    </lineage>
</organism>
<evidence type="ECO:0000250" key="1"/>
<evidence type="ECO:0000255" key="2"/>
<evidence type="ECO:0000305" key="3"/>
<feature type="signal peptide" evidence="2">
    <location>
        <begin position="1"/>
        <end position="17"/>
    </location>
</feature>
<feature type="chain" id="PRO_0000408623" description="Long chronological lifespan protein 2">
    <location>
        <begin position="18"/>
        <end position="133"/>
    </location>
</feature>
<accession>A3LY18</accession>
<protein>
    <recommendedName>
        <fullName>Long chronological lifespan protein 2</fullName>
    </recommendedName>
</protein>
<dbReference type="EMBL" id="CP000500">
    <property type="protein sequence ID" value="ABN67558.1"/>
    <property type="molecule type" value="Genomic_DNA"/>
</dbReference>
<dbReference type="RefSeq" id="XP_001385587.1">
    <property type="nucleotide sequence ID" value="XM_001385550.1"/>
</dbReference>
<dbReference type="SMR" id="A3LY18"/>
<dbReference type="FunCoup" id="A3LY18">
    <property type="interactions" value="24"/>
</dbReference>
<dbReference type="STRING" id="322104.A3LY18"/>
<dbReference type="GeneID" id="4839859"/>
<dbReference type="KEGG" id="pic:PICST_48963"/>
<dbReference type="eggNOG" id="ENOG502S416">
    <property type="taxonomic scope" value="Eukaryota"/>
</dbReference>
<dbReference type="HOGENOM" id="CLU_142363_1_0_1"/>
<dbReference type="InParanoid" id="A3LY18"/>
<dbReference type="OMA" id="KPATHDE"/>
<dbReference type="OrthoDB" id="2234316at2759"/>
<dbReference type="Proteomes" id="UP000002258">
    <property type="component" value="Chromosome 6"/>
</dbReference>
<dbReference type="GO" id="GO:0036503">
    <property type="term" value="P:ERAD pathway"/>
    <property type="evidence" value="ECO:0007669"/>
    <property type="project" value="TreeGrafter"/>
</dbReference>
<dbReference type="CDD" id="cd23996">
    <property type="entry name" value="LCL2-like"/>
    <property type="match status" value="1"/>
</dbReference>
<dbReference type="InterPro" id="IPR034543">
    <property type="entry name" value="LCL2"/>
</dbReference>
<dbReference type="PANTHER" id="PTHR38425">
    <property type="entry name" value="LONG CHRONOLOGICAL LIFESPAN PROTEIN 2"/>
    <property type="match status" value="1"/>
</dbReference>
<dbReference type="PANTHER" id="PTHR38425:SF1">
    <property type="entry name" value="LONG CHRONOLOGICAL LIFESPAN PROTEIN 2"/>
    <property type="match status" value="1"/>
</dbReference>
<name>LCL2_PICST</name>
<gene>
    <name type="primary">LCL2</name>
    <name type="ORF">PICST_48963</name>
</gene>
<comment type="function">
    <text evidence="1">Probable component of the endoplasmic reticulum-associated degradation (ERAD) pathway.</text>
</comment>
<comment type="similarity">
    <text evidence="3">Belongs to the LCL2 family.</text>
</comment>
<keyword id="KW-1185">Reference proteome</keyword>
<keyword id="KW-0732">Signal</keyword>
<reference key="1">
    <citation type="journal article" date="2007" name="Nat. Biotechnol.">
        <title>Genome sequence of the lignocellulose-bioconverting and xylose-fermenting yeast Pichia stipitis.</title>
        <authorList>
            <person name="Jeffries T.W."/>
            <person name="Grigoriev I.V."/>
            <person name="Grimwood J."/>
            <person name="Laplaza J.M."/>
            <person name="Aerts A."/>
            <person name="Salamov A."/>
            <person name="Schmutz J."/>
            <person name="Lindquist E."/>
            <person name="Dehal P."/>
            <person name="Shapiro H."/>
            <person name="Jin Y.-S."/>
            <person name="Passoth V."/>
            <person name="Richardson P.M."/>
        </authorList>
    </citation>
    <scope>NUCLEOTIDE SEQUENCE [LARGE SCALE GENOMIC DNA]</scope>
    <source>
        <strain>ATCC 58785 / CBS 6054 / NBRC 10063 / NRRL Y-11545</strain>
    </source>
</reference>
<proteinExistence type="inferred from homology"/>